<comment type="function">
    <text evidence="1">Plays a continuous role in plant development probably in the structural organization of compartments.</text>
</comment>
<comment type="subcellular location">
    <subcellularLocation>
        <location evidence="4">Membrane</location>
        <topology evidence="4">Single-pass membrane protein</topology>
    </subcellularLocation>
</comment>
<comment type="similarity">
    <text evidence="4">Belongs to the DnaJ family. C/III subfamily.</text>
</comment>
<comment type="sequence caution" evidence="4">
    <conflict type="erroneous gene model prediction">
        <sequence resource="EMBL-CDS" id="BAB10088"/>
    </conflict>
</comment>
<reference key="1">
    <citation type="journal article" date="2000" name="DNA Res.">
        <title>Structural analysis of Arabidopsis thaliana chromosome 5. X. Sequence features of the regions of 3,076,755 bp covered by sixty P1 and TAC clones.</title>
        <authorList>
            <person name="Sato S."/>
            <person name="Nakamura Y."/>
            <person name="Kaneko T."/>
            <person name="Katoh T."/>
            <person name="Asamizu E."/>
            <person name="Kotani H."/>
            <person name="Tabata S."/>
        </authorList>
    </citation>
    <scope>NUCLEOTIDE SEQUENCE [LARGE SCALE GENOMIC DNA]</scope>
    <source>
        <strain>cv. Columbia</strain>
    </source>
</reference>
<reference key="2">
    <citation type="journal article" date="2017" name="Plant J.">
        <title>Araport11: a complete reannotation of the Arabidopsis thaliana reference genome.</title>
        <authorList>
            <person name="Cheng C.Y."/>
            <person name="Krishnakumar V."/>
            <person name="Chan A.P."/>
            <person name="Thibaud-Nissen F."/>
            <person name="Schobel S."/>
            <person name="Town C.D."/>
        </authorList>
    </citation>
    <scope>GENOME REANNOTATION</scope>
    <source>
        <strain>cv. Columbia</strain>
    </source>
</reference>
<reference key="3">
    <citation type="submission" date="2004-09" db="EMBL/GenBank/DDBJ databases">
        <title>Large-scale analysis of RIKEN Arabidopsis full-length (RAFL) cDNAs.</title>
        <authorList>
            <person name="Totoki Y."/>
            <person name="Seki M."/>
            <person name="Ishida J."/>
            <person name="Nakajima M."/>
            <person name="Enju A."/>
            <person name="Kamiya A."/>
            <person name="Narusaka M."/>
            <person name="Shin-i T."/>
            <person name="Nakagawa M."/>
            <person name="Sakamoto N."/>
            <person name="Oishi K."/>
            <person name="Kohara Y."/>
            <person name="Kobayashi M."/>
            <person name="Toyoda A."/>
            <person name="Sakaki Y."/>
            <person name="Sakurai T."/>
            <person name="Iida K."/>
            <person name="Akiyama K."/>
            <person name="Satou M."/>
            <person name="Toyoda T."/>
            <person name="Konagaya A."/>
            <person name="Carninci P."/>
            <person name="Kawai J."/>
            <person name="Hayashizaki Y."/>
            <person name="Shinozaki K."/>
        </authorList>
    </citation>
    <scope>NUCLEOTIDE SEQUENCE [LARGE SCALE MRNA] OF 183-354</scope>
    <source>
        <strain>cv. Columbia</strain>
    </source>
</reference>
<reference key="4">
    <citation type="journal article" date="2001" name="Cell Stress Chaperones">
        <title>The J-domain proteins of Arabidopsis thaliana: an unexpectedly large and diverse family of chaperones.</title>
        <authorList>
            <person name="Miernyk J.A."/>
        </authorList>
    </citation>
    <scope>GENE FAMILY</scope>
    <scope>NOMENCLATURE</scope>
</reference>
<sequence length="354" mass="41223">MDGNKDDASRCLRIAEDAIVSGDKERALKFINMAKRLNPSLSVDELVAACDNLDSVSRNSSVSEKLKTMDGDDDKLETGKMKYTEENVDLVRNIIRNNDYYAILGLEKNCSVDEIRKAYRKLSLKVHPDKNKAPGSEEAFKKVSKAFTCLSDGNSRRQFDQVGIVDEFDHVQRRNRRPRRRYNTRNDFFDDEFDPEEIFRTVFGQQREVFRASHAYRTRQPRNQFREEEINVAGPSCLTIIQILPFFLLLLLAYLPFSEPDYSLHKNQSYQIPKTTQNTEISFYVRSASAFDEKFPLSSSARANLEGNVIKEYKHFLFQSCRIELQKRRWNKKIPTPHCIELQDRGFVDRHIPI</sequence>
<organism>
    <name type="scientific">Arabidopsis thaliana</name>
    <name type="common">Mouse-ear cress</name>
    <dbReference type="NCBI Taxonomy" id="3702"/>
    <lineage>
        <taxon>Eukaryota</taxon>
        <taxon>Viridiplantae</taxon>
        <taxon>Streptophyta</taxon>
        <taxon>Embryophyta</taxon>
        <taxon>Tracheophyta</taxon>
        <taxon>Spermatophyta</taxon>
        <taxon>Magnoliopsida</taxon>
        <taxon>eudicotyledons</taxon>
        <taxon>Gunneridae</taxon>
        <taxon>Pentapetalae</taxon>
        <taxon>rosids</taxon>
        <taxon>malvids</taxon>
        <taxon>Brassicales</taxon>
        <taxon>Brassicaceae</taxon>
        <taxon>Camelineae</taxon>
        <taxon>Arabidopsis</taxon>
    </lineage>
</organism>
<feature type="chain" id="PRO_0000071086" description="Chaperone protein dnaJ 49">
    <location>
        <begin position="1"/>
        <end position="354"/>
    </location>
</feature>
<feature type="transmembrane region" description="Helical" evidence="2">
    <location>
        <begin position="237"/>
        <end position="257"/>
    </location>
</feature>
<feature type="domain" description="J" evidence="3">
    <location>
        <begin position="99"/>
        <end position="163"/>
    </location>
</feature>
<protein>
    <recommendedName>
        <fullName>Chaperone protein dnaJ 49</fullName>
        <shortName>AtDjC49</shortName>
        <shortName>AtJ49</shortName>
    </recommendedName>
</protein>
<gene>
    <name type="primary">ATJ49</name>
    <name type="synonym">C49</name>
    <name type="ordered locus">At5g49060</name>
    <name type="ORF">K19E20.16</name>
    <name type="ORF">K20J1_3</name>
</gene>
<name>DNJ49_ARATH</name>
<proteinExistence type="evidence at transcript level"/>
<evidence type="ECO:0000250" key="1"/>
<evidence type="ECO:0000255" key="2"/>
<evidence type="ECO:0000255" key="3">
    <source>
        <dbReference type="PROSITE-ProRule" id="PRU00286"/>
    </source>
</evidence>
<evidence type="ECO:0000305" key="4"/>
<accession>Q9FH28</accession>
<accession>Q67XE5</accession>
<keyword id="KW-0143">Chaperone</keyword>
<keyword id="KW-0472">Membrane</keyword>
<keyword id="KW-1185">Reference proteome</keyword>
<keyword id="KW-0812">Transmembrane</keyword>
<keyword id="KW-1133">Transmembrane helix</keyword>
<dbReference type="EMBL" id="AB023028">
    <property type="protein sequence ID" value="BAB10088.1"/>
    <property type="status" value="ALT_SEQ"/>
    <property type="molecule type" value="Genomic_DNA"/>
</dbReference>
<dbReference type="EMBL" id="CP002688">
    <property type="protein sequence ID" value="AED95767.1"/>
    <property type="molecule type" value="Genomic_DNA"/>
</dbReference>
<dbReference type="EMBL" id="CP002688">
    <property type="protein sequence ID" value="ANM69562.1"/>
    <property type="molecule type" value="Genomic_DNA"/>
</dbReference>
<dbReference type="EMBL" id="AK176874">
    <property type="protein sequence ID" value="BAD44637.1"/>
    <property type="molecule type" value="mRNA"/>
</dbReference>
<dbReference type="RefSeq" id="NP_001331231.1">
    <property type="nucleotide sequence ID" value="NM_001344813.1"/>
</dbReference>
<dbReference type="RefSeq" id="NP_199717.2">
    <property type="nucleotide sequence ID" value="NM_124283.5"/>
</dbReference>
<dbReference type="SMR" id="Q9FH28"/>
<dbReference type="BioGRID" id="20211">
    <property type="interactions" value="1"/>
</dbReference>
<dbReference type="FunCoup" id="Q9FH28">
    <property type="interactions" value="4004"/>
</dbReference>
<dbReference type="IntAct" id="Q9FH28">
    <property type="interactions" value="1"/>
</dbReference>
<dbReference type="STRING" id="3702.Q9FH28"/>
<dbReference type="PaxDb" id="3702-AT5G49060.1"/>
<dbReference type="ProteomicsDB" id="222088"/>
<dbReference type="EnsemblPlants" id="AT5G49060.1">
    <property type="protein sequence ID" value="AT5G49060.1"/>
    <property type="gene ID" value="AT5G49060"/>
</dbReference>
<dbReference type="EnsemblPlants" id="AT5G49060.2">
    <property type="protein sequence ID" value="AT5G49060.2"/>
    <property type="gene ID" value="AT5G49060"/>
</dbReference>
<dbReference type="GeneID" id="834965"/>
<dbReference type="Gramene" id="AT5G49060.1">
    <property type="protein sequence ID" value="AT5G49060.1"/>
    <property type="gene ID" value="AT5G49060"/>
</dbReference>
<dbReference type="Gramene" id="AT5G49060.2">
    <property type="protein sequence ID" value="AT5G49060.2"/>
    <property type="gene ID" value="AT5G49060"/>
</dbReference>
<dbReference type="KEGG" id="ath:AT5G49060"/>
<dbReference type="Araport" id="AT5G49060"/>
<dbReference type="TAIR" id="AT5G49060"/>
<dbReference type="eggNOG" id="KOG0714">
    <property type="taxonomic scope" value="Eukaryota"/>
</dbReference>
<dbReference type="HOGENOM" id="CLU_043579_4_0_1"/>
<dbReference type="InParanoid" id="Q9FH28"/>
<dbReference type="OMA" id="DDRMRKK"/>
<dbReference type="PhylomeDB" id="Q9FH28"/>
<dbReference type="PRO" id="PR:Q9FH28"/>
<dbReference type="Proteomes" id="UP000006548">
    <property type="component" value="Chromosome 5"/>
</dbReference>
<dbReference type="ExpressionAtlas" id="Q9FH28">
    <property type="expression patterns" value="baseline and differential"/>
</dbReference>
<dbReference type="GO" id="GO:0016020">
    <property type="term" value="C:membrane"/>
    <property type="evidence" value="ECO:0007669"/>
    <property type="project" value="UniProtKB-SubCell"/>
</dbReference>
<dbReference type="CDD" id="cd06257">
    <property type="entry name" value="DnaJ"/>
    <property type="match status" value="1"/>
</dbReference>
<dbReference type="Gene3D" id="1.10.287.110">
    <property type="entry name" value="DnaJ domain"/>
    <property type="match status" value="1"/>
</dbReference>
<dbReference type="InterPro" id="IPR001623">
    <property type="entry name" value="DnaJ_domain"/>
</dbReference>
<dbReference type="InterPro" id="IPR051100">
    <property type="entry name" value="DnaJ_subfamily_B/C"/>
</dbReference>
<dbReference type="InterPro" id="IPR015399">
    <property type="entry name" value="DUF1977_DnaJ-like"/>
</dbReference>
<dbReference type="InterPro" id="IPR036869">
    <property type="entry name" value="J_dom_sf"/>
</dbReference>
<dbReference type="PANTHER" id="PTHR43908">
    <property type="entry name" value="AT29763P-RELATED"/>
    <property type="match status" value="1"/>
</dbReference>
<dbReference type="PANTHER" id="PTHR43908:SF5">
    <property type="entry name" value="CHAPERONE PROTEIN DNAJ 49"/>
    <property type="match status" value="1"/>
</dbReference>
<dbReference type="Pfam" id="PF00226">
    <property type="entry name" value="DnaJ"/>
    <property type="match status" value="1"/>
</dbReference>
<dbReference type="Pfam" id="PF09320">
    <property type="entry name" value="DUF1977"/>
    <property type="match status" value="1"/>
</dbReference>
<dbReference type="PRINTS" id="PR00625">
    <property type="entry name" value="JDOMAIN"/>
</dbReference>
<dbReference type="SMART" id="SM00271">
    <property type="entry name" value="DnaJ"/>
    <property type="match status" value="1"/>
</dbReference>
<dbReference type="SUPFAM" id="SSF46565">
    <property type="entry name" value="Chaperone J-domain"/>
    <property type="match status" value="1"/>
</dbReference>
<dbReference type="PROSITE" id="PS50076">
    <property type="entry name" value="DNAJ_2"/>
    <property type="match status" value="1"/>
</dbReference>